<feature type="chain" id="PRO_1000016482" description="Histidine--tRNA ligase">
    <location>
        <begin position="1"/>
        <end position="422"/>
    </location>
</feature>
<proteinExistence type="inferred from homology"/>
<protein>
    <recommendedName>
        <fullName evidence="1">Histidine--tRNA ligase</fullName>
        <ecNumber evidence="1">6.1.1.21</ecNumber>
    </recommendedName>
    <alternativeName>
        <fullName evidence="1">Histidyl-tRNA synthetase</fullName>
        <shortName evidence="1">HisRS</shortName>
    </alternativeName>
</protein>
<reference key="1">
    <citation type="journal article" date="2007" name="Curr. Biol.">
        <title>Reduced genome of the thioautotrophic intracellular symbiont in a deep-sea clam, Calyptogena okutanii.</title>
        <authorList>
            <person name="Kuwahara H."/>
            <person name="Yoshida T."/>
            <person name="Takaki Y."/>
            <person name="Shimamura S."/>
            <person name="Nishi S."/>
            <person name="Harada M."/>
            <person name="Matsuyama K."/>
            <person name="Takishita K."/>
            <person name="Kawato M."/>
            <person name="Uematsu K."/>
            <person name="Fujiwara Y."/>
            <person name="Sato T."/>
            <person name="Kato C."/>
            <person name="Kitagawa M."/>
            <person name="Kato I."/>
            <person name="Maruyama T."/>
        </authorList>
    </citation>
    <scope>NUCLEOTIDE SEQUENCE [LARGE SCALE GENOMIC DNA]</scope>
    <source>
        <strain>HA</strain>
    </source>
</reference>
<gene>
    <name evidence="1" type="primary">hisS</name>
    <name type="ordered locus">COSY_0618</name>
</gene>
<evidence type="ECO:0000255" key="1">
    <source>
        <dbReference type="HAMAP-Rule" id="MF_00127"/>
    </source>
</evidence>
<dbReference type="EC" id="6.1.1.21" evidence="1"/>
<dbReference type="EMBL" id="AP009247">
    <property type="protein sequence ID" value="BAF61731.1"/>
    <property type="molecule type" value="Genomic_DNA"/>
</dbReference>
<dbReference type="RefSeq" id="WP_011930001.1">
    <property type="nucleotide sequence ID" value="NC_009465.1"/>
</dbReference>
<dbReference type="SMR" id="A5CWE8"/>
<dbReference type="STRING" id="412965.COSY_0618"/>
<dbReference type="KEGG" id="vok:COSY_0618"/>
<dbReference type="eggNOG" id="COG0124">
    <property type="taxonomic scope" value="Bacteria"/>
</dbReference>
<dbReference type="HOGENOM" id="CLU_025113_1_1_6"/>
<dbReference type="OrthoDB" id="9800814at2"/>
<dbReference type="Proteomes" id="UP000000247">
    <property type="component" value="Chromosome"/>
</dbReference>
<dbReference type="GO" id="GO:0005737">
    <property type="term" value="C:cytoplasm"/>
    <property type="evidence" value="ECO:0007669"/>
    <property type="project" value="UniProtKB-SubCell"/>
</dbReference>
<dbReference type="GO" id="GO:0005524">
    <property type="term" value="F:ATP binding"/>
    <property type="evidence" value="ECO:0007669"/>
    <property type="project" value="UniProtKB-UniRule"/>
</dbReference>
<dbReference type="GO" id="GO:0004821">
    <property type="term" value="F:histidine-tRNA ligase activity"/>
    <property type="evidence" value="ECO:0007669"/>
    <property type="project" value="UniProtKB-UniRule"/>
</dbReference>
<dbReference type="GO" id="GO:0006427">
    <property type="term" value="P:histidyl-tRNA aminoacylation"/>
    <property type="evidence" value="ECO:0007669"/>
    <property type="project" value="UniProtKB-UniRule"/>
</dbReference>
<dbReference type="CDD" id="cd00773">
    <property type="entry name" value="HisRS-like_core"/>
    <property type="match status" value="1"/>
</dbReference>
<dbReference type="FunFam" id="3.30.930.10:FF:000005">
    <property type="entry name" value="Histidine--tRNA ligase"/>
    <property type="match status" value="1"/>
</dbReference>
<dbReference type="Gene3D" id="3.40.50.800">
    <property type="entry name" value="Anticodon-binding domain"/>
    <property type="match status" value="1"/>
</dbReference>
<dbReference type="Gene3D" id="3.30.930.10">
    <property type="entry name" value="Bira Bifunctional Protein, Domain 2"/>
    <property type="match status" value="1"/>
</dbReference>
<dbReference type="HAMAP" id="MF_00127">
    <property type="entry name" value="His_tRNA_synth"/>
    <property type="match status" value="1"/>
</dbReference>
<dbReference type="InterPro" id="IPR006195">
    <property type="entry name" value="aa-tRNA-synth_II"/>
</dbReference>
<dbReference type="InterPro" id="IPR045864">
    <property type="entry name" value="aa-tRNA-synth_II/BPL/LPL"/>
</dbReference>
<dbReference type="InterPro" id="IPR004154">
    <property type="entry name" value="Anticodon-bd"/>
</dbReference>
<dbReference type="InterPro" id="IPR036621">
    <property type="entry name" value="Anticodon-bd_dom_sf"/>
</dbReference>
<dbReference type="InterPro" id="IPR015807">
    <property type="entry name" value="His-tRNA-ligase"/>
</dbReference>
<dbReference type="InterPro" id="IPR041715">
    <property type="entry name" value="HisRS-like_core"/>
</dbReference>
<dbReference type="InterPro" id="IPR004516">
    <property type="entry name" value="HisRS/HisZ"/>
</dbReference>
<dbReference type="NCBIfam" id="TIGR00442">
    <property type="entry name" value="hisS"/>
    <property type="match status" value="1"/>
</dbReference>
<dbReference type="PANTHER" id="PTHR43707:SF1">
    <property type="entry name" value="HISTIDINE--TRNA LIGASE, MITOCHONDRIAL-RELATED"/>
    <property type="match status" value="1"/>
</dbReference>
<dbReference type="PANTHER" id="PTHR43707">
    <property type="entry name" value="HISTIDYL-TRNA SYNTHETASE"/>
    <property type="match status" value="1"/>
</dbReference>
<dbReference type="Pfam" id="PF03129">
    <property type="entry name" value="HGTP_anticodon"/>
    <property type="match status" value="1"/>
</dbReference>
<dbReference type="Pfam" id="PF13393">
    <property type="entry name" value="tRNA-synt_His"/>
    <property type="match status" value="1"/>
</dbReference>
<dbReference type="PIRSF" id="PIRSF001549">
    <property type="entry name" value="His-tRNA_synth"/>
    <property type="match status" value="1"/>
</dbReference>
<dbReference type="SUPFAM" id="SSF52954">
    <property type="entry name" value="Class II aaRS ABD-related"/>
    <property type="match status" value="1"/>
</dbReference>
<dbReference type="SUPFAM" id="SSF55681">
    <property type="entry name" value="Class II aaRS and biotin synthetases"/>
    <property type="match status" value="1"/>
</dbReference>
<dbReference type="PROSITE" id="PS50862">
    <property type="entry name" value="AA_TRNA_LIGASE_II"/>
    <property type="match status" value="1"/>
</dbReference>
<accession>A5CWE8</accession>
<comment type="catalytic activity">
    <reaction evidence="1">
        <text>tRNA(His) + L-histidine + ATP = L-histidyl-tRNA(His) + AMP + diphosphate + H(+)</text>
        <dbReference type="Rhea" id="RHEA:17313"/>
        <dbReference type="Rhea" id="RHEA-COMP:9665"/>
        <dbReference type="Rhea" id="RHEA-COMP:9689"/>
        <dbReference type="ChEBI" id="CHEBI:15378"/>
        <dbReference type="ChEBI" id="CHEBI:30616"/>
        <dbReference type="ChEBI" id="CHEBI:33019"/>
        <dbReference type="ChEBI" id="CHEBI:57595"/>
        <dbReference type="ChEBI" id="CHEBI:78442"/>
        <dbReference type="ChEBI" id="CHEBI:78527"/>
        <dbReference type="ChEBI" id="CHEBI:456215"/>
        <dbReference type="EC" id="6.1.1.21"/>
    </reaction>
</comment>
<comment type="subunit">
    <text evidence="1">Homodimer.</text>
</comment>
<comment type="subcellular location">
    <subcellularLocation>
        <location evidence="1">Cytoplasm</location>
    </subcellularLocation>
</comment>
<comment type="similarity">
    <text evidence="1">Belongs to the class-II aminoacyl-tRNA synthetase family.</text>
</comment>
<keyword id="KW-0030">Aminoacyl-tRNA synthetase</keyword>
<keyword id="KW-0067">ATP-binding</keyword>
<keyword id="KW-0963">Cytoplasm</keyword>
<keyword id="KW-0436">Ligase</keyword>
<keyword id="KW-0547">Nucleotide-binding</keyword>
<keyword id="KW-0648">Protein biosynthesis</keyword>
<keyword id="KW-1185">Reference proteome</keyword>
<name>SYH_VESOH</name>
<organism>
    <name type="scientific">Vesicomyosocius okutanii subsp. Calyptogena okutanii (strain HA)</name>
    <dbReference type="NCBI Taxonomy" id="412965"/>
    <lineage>
        <taxon>Bacteria</taxon>
        <taxon>Pseudomonadati</taxon>
        <taxon>Pseudomonadota</taxon>
        <taxon>Gammaproteobacteria</taxon>
        <taxon>Candidatus Pseudothioglobaceae</taxon>
        <taxon>Candidatus Vesicomyosocius</taxon>
    </lineage>
</organism>
<sequence length="422" mass="48091">MSKKIQAIRGMNDLLPKNSALWLSLEKTIFDLFITYGYQNIRTPIVEKTDTFCRAIGGDTDIVEKEMYSWKETSGESLSLRPEGTAGCVRMMIEHNLPRESIQKVFYQGAMFRHERPQKGRYRQFHQVGLEIFGVFNAKADAELMIIMHALWQTIGLKNIVLEINTLGSNEVRNAYRKILVAYFNQHKNQLNEDGLKQLKTNPFRILDSKNKAIHSLISDAPKLMDYLDKKSIQHFKQFKSYLDALNITYVINTSLVRGLDYYNRTVFEWTTTDLGTQSTICAGGRYDGLIEKMGGTPTPAVGLAIGLERLVLLLEAQNLISTKSTLSIYLIAFGKKEQIKSIQIANVLHDELPNVILYNDLTLGSFKSQFEKADKAKANFALILGEQELNNNQISIKPLRNQGTQQTMNLEEAIKYFKENQ</sequence>